<feature type="chain" id="PRO_0000131271" description="Large ribosomal subunit protein uL18">
    <location>
        <begin position="1"/>
        <end position="117"/>
    </location>
</feature>
<evidence type="ECO:0000255" key="1">
    <source>
        <dbReference type="HAMAP-Rule" id="MF_01337"/>
    </source>
</evidence>
<evidence type="ECO:0000305" key="2"/>
<reference key="1">
    <citation type="submission" date="2003-06" db="EMBL/GenBank/DDBJ databases">
        <title>The complete genome sequence of Haemophilus ducreyi.</title>
        <authorList>
            <person name="Munson R.S. Jr."/>
            <person name="Ray W.C."/>
            <person name="Mahairas G."/>
            <person name="Sabo P."/>
            <person name="Mungur R."/>
            <person name="Johnson L."/>
            <person name="Nguyen D."/>
            <person name="Wang J."/>
            <person name="Forst C."/>
            <person name="Hood L."/>
        </authorList>
    </citation>
    <scope>NUCLEOTIDE SEQUENCE [LARGE SCALE GENOMIC DNA]</scope>
    <source>
        <strain>35000HP / ATCC 700724</strain>
    </source>
</reference>
<sequence>MDKKVARIRRASRARHLMREQGATRLVVHRTPRHIYAQVIAPNGSEVLAAASTVEKVIKEQVQYTGNKDAAAIVGKLVAERALAKGIQVVAFDRSGFKYHGRVQVLADAAREAGLQF</sequence>
<accession>Q7VKE9</accession>
<organism>
    <name type="scientific">Haemophilus ducreyi (strain 35000HP / ATCC 700724)</name>
    <dbReference type="NCBI Taxonomy" id="233412"/>
    <lineage>
        <taxon>Bacteria</taxon>
        <taxon>Pseudomonadati</taxon>
        <taxon>Pseudomonadota</taxon>
        <taxon>Gammaproteobacteria</taxon>
        <taxon>Pasteurellales</taxon>
        <taxon>Pasteurellaceae</taxon>
        <taxon>Haemophilus</taxon>
    </lineage>
</organism>
<name>RL18_HAEDU</name>
<dbReference type="EMBL" id="AE017143">
    <property type="protein sequence ID" value="AAP96680.1"/>
    <property type="molecule type" value="Genomic_DNA"/>
</dbReference>
<dbReference type="RefSeq" id="WP_010945706.1">
    <property type="nucleotide sequence ID" value="NC_002940.2"/>
</dbReference>
<dbReference type="SMR" id="Q7VKE9"/>
<dbReference type="STRING" id="233412.HD_1962"/>
<dbReference type="GeneID" id="60733559"/>
<dbReference type="KEGG" id="hdu:HD_1962"/>
<dbReference type="eggNOG" id="COG0256">
    <property type="taxonomic scope" value="Bacteria"/>
</dbReference>
<dbReference type="HOGENOM" id="CLU_098841_0_1_6"/>
<dbReference type="OrthoDB" id="9810939at2"/>
<dbReference type="Proteomes" id="UP000001022">
    <property type="component" value="Chromosome"/>
</dbReference>
<dbReference type="GO" id="GO:0022625">
    <property type="term" value="C:cytosolic large ribosomal subunit"/>
    <property type="evidence" value="ECO:0007669"/>
    <property type="project" value="TreeGrafter"/>
</dbReference>
<dbReference type="GO" id="GO:0008097">
    <property type="term" value="F:5S rRNA binding"/>
    <property type="evidence" value="ECO:0007669"/>
    <property type="project" value="TreeGrafter"/>
</dbReference>
<dbReference type="GO" id="GO:0003735">
    <property type="term" value="F:structural constituent of ribosome"/>
    <property type="evidence" value="ECO:0007669"/>
    <property type="project" value="InterPro"/>
</dbReference>
<dbReference type="GO" id="GO:0006412">
    <property type="term" value="P:translation"/>
    <property type="evidence" value="ECO:0007669"/>
    <property type="project" value="UniProtKB-UniRule"/>
</dbReference>
<dbReference type="CDD" id="cd00432">
    <property type="entry name" value="Ribosomal_L18_L5e"/>
    <property type="match status" value="1"/>
</dbReference>
<dbReference type="FunFam" id="3.30.420.100:FF:000001">
    <property type="entry name" value="50S ribosomal protein L18"/>
    <property type="match status" value="1"/>
</dbReference>
<dbReference type="Gene3D" id="3.30.420.100">
    <property type="match status" value="1"/>
</dbReference>
<dbReference type="HAMAP" id="MF_01337_B">
    <property type="entry name" value="Ribosomal_uL18_B"/>
    <property type="match status" value="1"/>
</dbReference>
<dbReference type="InterPro" id="IPR004389">
    <property type="entry name" value="Ribosomal_uL18_bac-type"/>
</dbReference>
<dbReference type="InterPro" id="IPR005484">
    <property type="entry name" value="Ribosomal_uL18_bac/euk"/>
</dbReference>
<dbReference type="NCBIfam" id="TIGR00060">
    <property type="entry name" value="L18_bact"/>
    <property type="match status" value="1"/>
</dbReference>
<dbReference type="PANTHER" id="PTHR12899">
    <property type="entry name" value="39S RIBOSOMAL PROTEIN L18, MITOCHONDRIAL"/>
    <property type="match status" value="1"/>
</dbReference>
<dbReference type="PANTHER" id="PTHR12899:SF3">
    <property type="entry name" value="LARGE RIBOSOMAL SUBUNIT PROTEIN UL18M"/>
    <property type="match status" value="1"/>
</dbReference>
<dbReference type="Pfam" id="PF00861">
    <property type="entry name" value="Ribosomal_L18p"/>
    <property type="match status" value="1"/>
</dbReference>
<dbReference type="SUPFAM" id="SSF53137">
    <property type="entry name" value="Translational machinery components"/>
    <property type="match status" value="1"/>
</dbReference>
<proteinExistence type="inferred from homology"/>
<keyword id="KW-1185">Reference proteome</keyword>
<keyword id="KW-0687">Ribonucleoprotein</keyword>
<keyword id="KW-0689">Ribosomal protein</keyword>
<keyword id="KW-0694">RNA-binding</keyword>
<keyword id="KW-0699">rRNA-binding</keyword>
<gene>
    <name evidence="1" type="primary">rplR</name>
    <name type="ordered locus">HD_1962</name>
</gene>
<comment type="function">
    <text evidence="1">This is one of the proteins that bind and probably mediate the attachment of the 5S RNA into the large ribosomal subunit, where it forms part of the central protuberance.</text>
</comment>
<comment type="subunit">
    <text evidence="1">Part of the 50S ribosomal subunit; part of the 5S rRNA/L5/L18/L25 subcomplex. Contacts the 5S and 23S rRNAs.</text>
</comment>
<comment type="similarity">
    <text evidence="1">Belongs to the universal ribosomal protein uL18 family.</text>
</comment>
<protein>
    <recommendedName>
        <fullName evidence="1">Large ribosomal subunit protein uL18</fullName>
    </recommendedName>
    <alternativeName>
        <fullName evidence="2">50S ribosomal protein L18</fullName>
    </alternativeName>
</protein>